<proteinExistence type="inferred from homology"/>
<feature type="chain" id="PRO_1000127255" description="Small ribosomal subunit protein eS17">
    <location>
        <begin position="1"/>
        <end position="59"/>
    </location>
</feature>
<organism>
    <name type="scientific">Halobacterium salinarum (strain ATCC 29341 / DSM 671 / R1)</name>
    <dbReference type="NCBI Taxonomy" id="478009"/>
    <lineage>
        <taxon>Archaea</taxon>
        <taxon>Methanobacteriati</taxon>
        <taxon>Methanobacteriota</taxon>
        <taxon>Stenosarchaea group</taxon>
        <taxon>Halobacteria</taxon>
        <taxon>Halobacteriales</taxon>
        <taxon>Halobacteriaceae</taxon>
        <taxon>Halobacterium</taxon>
        <taxon>Halobacterium salinarum NRC-34001</taxon>
    </lineage>
</organism>
<gene>
    <name evidence="1" type="primary">rps17e</name>
    <name type="ordered locus">OE_3062F</name>
</gene>
<evidence type="ECO:0000255" key="1">
    <source>
        <dbReference type="HAMAP-Rule" id="MF_00511"/>
    </source>
</evidence>
<evidence type="ECO:0000305" key="2"/>
<dbReference type="EMBL" id="AM774415">
    <property type="protein sequence ID" value="CAP14030.1"/>
    <property type="molecule type" value="Genomic_DNA"/>
</dbReference>
<dbReference type="RefSeq" id="WP_010903043.1">
    <property type="nucleotide sequence ID" value="NC_010364.1"/>
</dbReference>
<dbReference type="SMR" id="B0R5L3"/>
<dbReference type="EnsemblBacteria" id="CAP14030">
    <property type="protein sequence ID" value="CAP14030"/>
    <property type="gene ID" value="OE_3062F"/>
</dbReference>
<dbReference type="KEGG" id="hsl:OE_3062F"/>
<dbReference type="HOGENOM" id="CLU_176720_1_0_2"/>
<dbReference type="PhylomeDB" id="B0R5L3"/>
<dbReference type="Proteomes" id="UP000001321">
    <property type="component" value="Chromosome"/>
</dbReference>
<dbReference type="GO" id="GO:0005829">
    <property type="term" value="C:cytosol"/>
    <property type="evidence" value="ECO:0007669"/>
    <property type="project" value="UniProtKB-ARBA"/>
</dbReference>
<dbReference type="GO" id="GO:1990904">
    <property type="term" value="C:ribonucleoprotein complex"/>
    <property type="evidence" value="ECO:0007669"/>
    <property type="project" value="UniProtKB-KW"/>
</dbReference>
<dbReference type="GO" id="GO:0005840">
    <property type="term" value="C:ribosome"/>
    <property type="evidence" value="ECO:0007669"/>
    <property type="project" value="UniProtKB-KW"/>
</dbReference>
<dbReference type="GO" id="GO:0003735">
    <property type="term" value="F:structural constituent of ribosome"/>
    <property type="evidence" value="ECO:0007669"/>
    <property type="project" value="InterPro"/>
</dbReference>
<dbReference type="GO" id="GO:0006412">
    <property type="term" value="P:translation"/>
    <property type="evidence" value="ECO:0007669"/>
    <property type="project" value="UniProtKB-UniRule"/>
</dbReference>
<dbReference type="Gene3D" id="1.10.60.20">
    <property type="entry name" value="Ribosomal protein S17e-like"/>
    <property type="match status" value="1"/>
</dbReference>
<dbReference type="HAMAP" id="MF_00511">
    <property type="entry name" value="Ribosomal_eS17"/>
    <property type="match status" value="1"/>
</dbReference>
<dbReference type="InterPro" id="IPR001210">
    <property type="entry name" value="Ribosomal_eS17"/>
</dbReference>
<dbReference type="InterPro" id="IPR018273">
    <property type="entry name" value="Ribosomal_eS17_CS"/>
</dbReference>
<dbReference type="InterPro" id="IPR036401">
    <property type="entry name" value="Ribosomal_eS17_sf"/>
</dbReference>
<dbReference type="NCBIfam" id="NF002242">
    <property type="entry name" value="PRK01151.1"/>
    <property type="match status" value="1"/>
</dbReference>
<dbReference type="PANTHER" id="PTHR10732">
    <property type="entry name" value="40S RIBOSOMAL PROTEIN S17"/>
    <property type="match status" value="1"/>
</dbReference>
<dbReference type="PANTHER" id="PTHR10732:SF0">
    <property type="entry name" value="40S RIBOSOMAL PROTEIN S17"/>
    <property type="match status" value="1"/>
</dbReference>
<dbReference type="Pfam" id="PF00833">
    <property type="entry name" value="Ribosomal_S17e"/>
    <property type="match status" value="1"/>
</dbReference>
<dbReference type="SUPFAM" id="SSF116820">
    <property type="entry name" value="Rps17e-like"/>
    <property type="match status" value="1"/>
</dbReference>
<dbReference type="PROSITE" id="PS00712">
    <property type="entry name" value="RIBOSOMAL_S17E"/>
    <property type="match status" value="1"/>
</dbReference>
<accession>B0R5L3</accession>
<protein>
    <recommendedName>
        <fullName evidence="1">Small ribosomal subunit protein eS17</fullName>
    </recommendedName>
    <alternativeName>
        <fullName evidence="2">30S ribosomal protein S17e</fullName>
    </alternativeName>
</protein>
<sequence length="59" mass="6971">MAIKPDYVKKTGNILMERYQDAFSREDFEHNKDAVTELTNIESKNVRNRIAGYITHKRN</sequence>
<name>RS17E_HALS3</name>
<keyword id="KW-0687">Ribonucleoprotein</keyword>
<keyword id="KW-0689">Ribosomal protein</keyword>
<comment type="similarity">
    <text evidence="1">Belongs to the eukaryotic ribosomal protein eS17 family.</text>
</comment>
<reference key="1">
    <citation type="journal article" date="2008" name="Genomics">
        <title>Evolution in the laboratory: the genome of Halobacterium salinarum strain R1 compared to that of strain NRC-1.</title>
        <authorList>
            <person name="Pfeiffer F."/>
            <person name="Schuster S.C."/>
            <person name="Broicher A."/>
            <person name="Falb M."/>
            <person name="Palm P."/>
            <person name="Rodewald K."/>
            <person name="Ruepp A."/>
            <person name="Soppa J."/>
            <person name="Tittor J."/>
            <person name="Oesterhelt D."/>
        </authorList>
    </citation>
    <scope>NUCLEOTIDE SEQUENCE [LARGE SCALE GENOMIC DNA]</scope>
    <source>
        <strain>ATCC 29341 / DSM 671 / R1</strain>
    </source>
</reference>